<accession>P9WJK3</accession>
<accession>L0TE53</accession>
<accession>O05435</accession>
<accession>Q7D4M1</accession>
<feature type="chain" id="PRO_0000419663" description="Probable peptidoglycan biosynthesis protein MviN">
    <location>
        <begin position="1"/>
        <end position="1184"/>
    </location>
</feature>
<feature type="topological domain" description="Cytoplasmic" evidence="1">
    <location>
        <begin position="1"/>
        <end position="41"/>
    </location>
</feature>
<feature type="transmembrane region" description="Helical" evidence="1">
    <location>
        <begin position="42"/>
        <end position="62"/>
    </location>
</feature>
<feature type="topological domain" description="Extracellular" evidence="1">
    <location>
        <begin position="63"/>
        <end position="67"/>
    </location>
</feature>
<feature type="transmembrane region" description="Helical" evidence="1">
    <location>
        <begin position="68"/>
        <end position="88"/>
    </location>
</feature>
<feature type="topological domain" description="Cytoplasmic" evidence="1">
    <location>
        <begin position="89"/>
        <end position="107"/>
    </location>
</feature>
<feature type="transmembrane region" description="Helical" evidence="1">
    <location>
        <begin position="108"/>
        <end position="128"/>
    </location>
</feature>
<feature type="topological domain" description="Extracellular" evidence="1">
    <location>
        <begin position="129"/>
        <end position="145"/>
    </location>
</feature>
<feature type="transmembrane region" description="Helical" evidence="1">
    <location>
        <begin position="146"/>
        <end position="166"/>
    </location>
</feature>
<feature type="topological domain" description="Cytoplasmic" evidence="1">
    <location>
        <begin position="167"/>
        <end position="176"/>
    </location>
</feature>
<feature type="transmembrane region" description="Helical" evidence="1">
    <location>
        <begin position="177"/>
        <end position="197"/>
    </location>
</feature>
<feature type="topological domain" description="Extracellular" evidence="1">
    <location>
        <begin position="198"/>
        <end position="212"/>
    </location>
</feature>
<feature type="transmembrane region" description="Helical" evidence="1">
    <location>
        <begin position="213"/>
        <end position="233"/>
    </location>
</feature>
<feature type="topological domain" description="Cytoplasmic" evidence="1">
    <location>
        <begin position="234"/>
        <end position="254"/>
    </location>
</feature>
<feature type="transmembrane region" description="Helical" evidence="1">
    <location>
        <begin position="255"/>
        <end position="275"/>
    </location>
</feature>
<feature type="topological domain" description="Extracellular" evidence="1">
    <location>
        <begin position="276"/>
        <end position="294"/>
    </location>
</feature>
<feature type="transmembrane region" description="Helical" evidence="1">
    <location>
        <begin position="295"/>
        <end position="315"/>
    </location>
</feature>
<feature type="topological domain" description="Cytoplasmic" evidence="1">
    <location>
        <begin position="316"/>
        <end position="343"/>
    </location>
</feature>
<feature type="transmembrane region" description="Helical" evidence="1">
    <location>
        <begin position="344"/>
        <end position="364"/>
    </location>
</feature>
<feature type="topological domain" description="Extracellular" evidence="1">
    <location>
        <begin position="365"/>
        <end position="374"/>
    </location>
</feature>
<feature type="transmembrane region" description="Helical" evidence="1">
    <location>
        <begin position="375"/>
        <end position="395"/>
    </location>
</feature>
<feature type="topological domain" description="Cytoplasmic" evidence="1">
    <location>
        <begin position="396"/>
        <end position="409"/>
    </location>
</feature>
<feature type="transmembrane region" description="Helical" evidence="1">
    <location>
        <begin position="410"/>
        <end position="430"/>
    </location>
</feature>
<feature type="topological domain" description="Extracellular" evidence="1">
    <location>
        <begin position="431"/>
        <end position="435"/>
    </location>
</feature>
<feature type="transmembrane region" description="Helical" evidence="1">
    <location>
        <begin position="436"/>
        <end position="456"/>
    </location>
</feature>
<feature type="topological domain" description="Cytoplasmic" evidence="1">
    <location>
        <begin position="457"/>
        <end position="476"/>
    </location>
</feature>
<feature type="transmembrane region" description="Helical" evidence="1">
    <location>
        <begin position="477"/>
        <end position="497"/>
    </location>
</feature>
<feature type="topological domain" description="Extracellular" evidence="1">
    <location>
        <begin position="498"/>
        <end position="512"/>
    </location>
</feature>
<feature type="transmembrane region" description="Helical" evidence="1">
    <location>
        <begin position="513"/>
        <end position="533"/>
    </location>
</feature>
<feature type="topological domain" description="Cytoplasmic" evidence="1">
    <location>
        <begin position="534"/>
        <end position="979"/>
    </location>
</feature>
<feature type="transmembrane region" description="Helical" evidence="1">
    <location>
        <begin position="980"/>
        <end position="1000"/>
    </location>
</feature>
<feature type="topological domain" description="Extracellular" evidence="1">
    <location>
        <begin position="1001"/>
        <end position="1184"/>
    </location>
</feature>
<feature type="region of interest" description="Disordered" evidence="2">
    <location>
        <begin position="557"/>
        <end position="673"/>
    </location>
</feature>
<feature type="compositionally biased region" description="Polar residues" evidence="2">
    <location>
        <begin position="561"/>
        <end position="573"/>
    </location>
</feature>
<feature type="compositionally biased region" description="Basic and acidic residues" evidence="2">
    <location>
        <begin position="593"/>
        <end position="603"/>
    </location>
</feature>
<feature type="compositionally biased region" description="Basic and acidic residues" evidence="2">
    <location>
        <begin position="613"/>
        <end position="622"/>
    </location>
</feature>
<feature type="modified residue" description="N-acetylmethionine" evidence="5">
    <location>
        <position position="1"/>
    </location>
</feature>
<feature type="modified residue" description="Phosphothreonine" evidence="3">
    <location>
        <position position="947"/>
    </location>
</feature>
<feature type="mutagenesis site" description="Abolishes phosphorylation by PknB." evidence="3">
    <original>T</original>
    <variation>A</variation>
    <location>
        <position position="947"/>
    </location>
</feature>
<feature type="turn" evidence="8">
    <location>
        <begin position="706"/>
        <end position="709"/>
    </location>
</feature>
<feature type="strand" evidence="8">
    <location>
        <begin position="710"/>
        <end position="719"/>
    </location>
</feature>
<feature type="strand" evidence="8">
    <location>
        <begin position="723"/>
        <end position="729"/>
    </location>
</feature>
<feature type="turn" evidence="8">
    <location>
        <begin position="730"/>
        <end position="733"/>
    </location>
</feature>
<feature type="strand" evidence="8">
    <location>
        <begin position="734"/>
        <end position="741"/>
    </location>
</feature>
<feature type="helix" evidence="8">
    <location>
        <begin position="749"/>
        <end position="763"/>
    </location>
</feature>
<feature type="strand" evidence="6">
    <location>
        <begin position="768"/>
        <end position="770"/>
    </location>
</feature>
<feature type="strand" evidence="8">
    <location>
        <begin position="773"/>
        <end position="779"/>
    </location>
</feature>
<feature type="strand" evidence="8">
    <location>
        <begin position="782"/>
        <end position="788"/>
    </location>
</feature>
<feature type="strand" evidence="8">
    <location>
        <begin position="792"/>
        <end position="794"/>
    </location>
</feature>
<feature type="helix" evidence="8">
    <location>
        <begin position="795"/>
        <end position="799"/>
    </location>
</feature>
<feature type="helix" evidence="8">
    <location>
        <begin position="805"/>
        <end position="824"/>
    </location>
</feature>
<feature type="helix" evidence="8">
    <location>
        <begin position="834"/>
        <end position="836"/>
    </location>
</feature>
<feature type="strand" evidence="8">
    <location>
        <begin position="837"/>
        <end position="840"/>
    </location>
</feature>
<feature type="turn" evidence="6">
    <location>
        <begin position="841"/>
        <end position="843"/>
    </location>
</feature>
<feature type="strand" evidence="8">
    <location>
        <begin position="845"/>
        <end position="847"/>
    </location>
</feature>
<feature type="helix" evidence="8">
    <location>
        <begin position="858"/>
        <end position="874"/>
    </location>
</feature>
<feature type="strand" evidence="8">
    <location>
        <begin position="875"/>
        <end position="877"/>
    </location>
</feature>
<feature type="strand" evidence="8">
    <location>
        <begin position="888"/>
        <end position="890"/>
    </location>
</feature>
<feature type="strand" evidence="7">
    <location>
        <begin position="897"/>
        <end position="899"/>
    </location>
</feature>
<feature type="helix" evidence="8">
    <location>
        <begin position="902"/>
        <end position="905"/>
    </location>
</feature>
<feature type="helix" evidence="8">
    <location>
        <begin position="911"/>
        <end position="921"/>
    </location>
</feature>
<feature type="helix" evidence="8">
    <location>
        <begin position="930"/>
        <end position="941"/>
    </location>
</feature>
<keyword id="KW-0002">3D-structure</keyword>
<keyword id="KW-0007">Acetylation</keyword>
<keyword id="KW-1003">Cell membrane</keyword>
<keyword id="KW-0133">Cell shape</keyword>
<keyword id="KW-0472">Membrane</keyword>
<keyword id="KW-0573">Peptidoglycan synthesis</keyword>
<keyword id="KW-0597">Phosphoprotein</keyword>
<keyword id="KW-1185">Reference proteome</keyword>
<keyword id="KW-0812">Transmembrane</keyword>
<keyword id="KW-1133">Transmembrane helix</keyword>
<name>MVINL_MYCTU</name>
<sequence length="1184" mass="123564">MRPSPGEVPTASQRQPELSDAALVSHSWAMAFATLISRITGFARIVLLAAILGAALASSFSVANQLPNLVAALVLEATFTAIFVPVLARAEQDDPDGGAAFVRRLVTLATTLLLGATTLSVLAAPLLVRLMLGTNPQVNEPLTTAFAYLLLPQVLVYGLSSVFMAILNTRNVFGPPAWAPVVNNVVAIATLAVYLAVPGELSVDPVRMGNAKLLVLGIGTTAGVFAQTAVLLVAIRREHISLRPLWGIDQRLKRFGAMAAAMVLYVLISQLGLVVGNRIASTAAASGPAIYNYTWLVLMLPFGMIGVTVLTVVMPRLSRNAAADDTPAVLADLSLATRLTMITLIPTVAFMTVGGPAIGSALFAYGNFGDVDAGYLGAAIALSAFTLIPYALVLLQLRVFYAREQPWTPITIIVVITGVKILGSLLAPHITGDPQLVAAYLGLANGLGFLAGTIVGYYILRRALRPDGGQLIGVGEARTVLVTVAASLLAGLLAHVADRLLGLSELTAHAGSVGSLLRLSVLALIMLPILAAVTLCARVPEARAALDAVRARIRSRRLKTGPQTQNVLDQSSRPGPVTYPERRRLAPPRGKSVVHEPIRRRPPEQVARAGRAKGPEVIDRPSENASFGAASGAELPRPVADELQLDAPAGRDPGPVSRPHPSDLQNGDLPADAARGPIAFDALREPDRESSAPPDDVQLVPGARIANGRYRLLIFHGGVPPLQFWQALDTALDRQVALTFVDPQGVLPDDVLQETLSRTLRLSRIDKPGVARVLDVVHTRAGGLVVAEWIRGGSLQEVADTSPSPVGAIRAMQSLAAAADAAHRAGVALSIDHPSRVRVSIDGDVVLAYPATMPDANPQDDIRGIGASLYALLVNRWPLPEAGVRSGLAPAERDTAGQPIEPADIDRDIPFQISAVAARSVQGDGGIRSASTLLNLMQQATAVADRTEVLGPIDEAPVSAAPRTSAPNSETYTRRRRNLLIGIGAGAAVLMVALLVLASVLSRIFGDVSGGLNKDELGLNAPTASTSAASSAPPGSVVKPTKVTVFSPDGGADNPGEADLAIDGNPATSWKTDIYTDPVPFPSFKNGVGLMLQLPQATVVGTVAIDVASTGTKVEIRSASTPTPATLEDTAVLTSATALRPGHNTISVEAAAPTSNLLVWISTLGTTDGKSQADISEITIYAAS</sequence>
<reference key="1">
    <citation type="journal article" date="1998" name="Nature">
        <title>Deciphering the biology of Mycobacterium tuberculosis from the complete genome sequence.</title>
        <authorList>
            <person name="Cole S.T."/>
            <person name="Brosch R."/>
            <person name="Parkhill J."/>
            <person name="Garnier T."/>
            <person name="Churcher C.M."/>
            <person name="Harris D.E."/>
            <person name="Gordon S.V."/>
            <person name="Eiglmeier K."/>
            <person name="Gas S."/>
            <person name="Barry C.E. III"/>
            <person name="Tekaia F."/>
            <person name="Badcock K."/>
            <person name="Basham D."/>
            <person name="Brown D."/>
            <person name="Chillingworth T."/>
            <person name="Connor R."/>
            <person name="Davies R.M."/>
            <person name="Devlin K."/>
            <person name="Feltwell T."/>
            <person name="Gentles S."/>
            <person name="Hamlin N."/>
            <person name="Holroyd S."/>
            <person name="Hornsby T."/>
            <person name="Jagels K."/>
            <person name="Krogh A."/>
            <person name="McLean J."/>
            <person name="Moule S."/>
            <person name="Murphy L.D."/>
            <person name="Oliver S."/>
            <person name="Osborne J."/>
            <person name="Quail M.A."/>
            <person name="Rajandream M.A."/>
            <person name="Rogers J."/>
            <person name="Rutter S."/>
            <person name="Seeger K."/>
            <person name="Skelton S."/>
            <person name="Squares S."/>
            <person name="Squares R."/>
            <person name="Sulston J.E."/>
            <person name="Taylor K."/>
            <person name="Whitehead S."/>
            <person name="Barrell B.G."/>
        </authorList>
    </citation>
    <scope>NUCLEOTIDE SEQUENCE [LARGE SCALE GENOMIC DNA]</scope>
    <source>
        <strain>ATCC 25618 / H37Rv</strain>
    </source>
</reference>
<reference key="2">
    <citation type="journal article" date="2011" name="Mol. Cell. Proteomics">
        <title>Proteogenomic analysis of Mycobacterium tuberculosis by high resolution mass spectrometry.</title>
        <authorList>
            <person name="Kelkar D.S."/>
            <person name="Kumar D."/>
            <person name="Kumar P."/>
            <person name="Balakrishnan L."/>
            <person name="Muthusamy B."/>
            <person name="Yadav A.K."/>
            <person name="Shrivastava P."/>
            <person name="Marimuthu A."/>
            <person name="Anand S."/>
            <person name="Sundaram H."/>
            <person name="Kingsbury R."/>
            <person name="Harsha H.C."/>
            <person name="Nair B."/>
            <person name="Prasad T.S."/>
            <person name="Chauhan D.S."/>
            <person name="Katoch K."/>
            <person name="Katoch V.M."/>
            <person name="Kumar P."/>
            <person name="Chaerkady R."/>
            <person name="Ramachandran S."/>
            <person name="Dash D."/>
            <person name="Pandey A."/>
        </authorList>
    </citation>
    <scope>ACETYLATION [LARGE SCALE ANALYSIS] AT MET-1</scope>
    <scope>IDENTIFICATION BY MASS SPECTROMETRY [LARGE SCALE ANALYSIS]</scope>
    <source>
        <strain>ATCC 25618 / H37Rv</strain>
    </source>
</reference>
<reference key="3">
    <citation type="journal article" date="2012" name="Sci. Signal.">
        <title>A phosphorylated pseudokinase complex controls cell wall synthesis in mycobacteria.</title>
        <authorList>
            <person name="Gee C.L."/>
            <person name="Papavinasasundaram K.G."/>
            <person name="Blair S.R."/>
            <person name="Baer C.E."/>
            <person name="Falick A.M."/>
            <person name="King D.S."/>
            <person name="Griffin J.E."/>
            <person name="Venghatakrishnan H."/>
            <person name="Zukauskas A."/>
            <person name="Wei J.R."/>
            <person name="Dhiman R.K."/>
            <person name="Crick D.C."/>
            <person name="Rubin E.J."/>
            <person name="Sassetti C.M."/>
            <person name="Alber T."/>
        </authorList>
    </citation>
    <scope>X-RAY CRYSTALLOGRAPHY (2.26 ANGSTROMS) OF 678-963</scope>
    <scope>FUNCTION</scope>
    <scope>ACTIVITY REGULATION</scope>
    <scope>SUBUNIT</scope>
    <scope>INTERACTION WITH FHAA</scope>
    <scope>DOMAIN</scope>
    <scope>PHOSPHORYLATION AT THR-947</scope>
    <scope>MUTAGENESIS OF THR-947</scope>
</reference>
<organism>
    <name type="scientific">Mycobacterium tuberculosis (strain ATCC 25618 / H37Rv)</name>
    <dbReference type="NCBI Taxonomy" id="83332"/>
    <lineage>
        <taxon>Bacteria</taxon>
        <taxon>Bacillati</taxon>
        <taxon>Actinomycetota</taxon>
        <taxon>Actinomycetes</taxon>
        <taxon>Mycobacteriales</taxon>
        <taxon>Mycobacteriaceae</taxon>
        <taxon>Mycobacterium</taxon>
        <taxon>Mycobacterium tuberculosis complex</taxon>
    </lineage>
</organism>
<comment type="function">
    <text evidence="3">Essential for cell growth and peptidoglycan synthesis.</text>
</comment>
<comment type="activity regulation">
    <text evidence="3">Probably regulated via interaction with FhaA.</text>
</comment>
<comment type="subunit">
    <text evidence="3">Homodimer. Interacts with the FHA domain of FhaA.</text>
</comment>
<comment type="subcellular location">
    <subcellularLocation>
        <location evidence="4">Cell membrane</location>
        <topology evidence="4">Multi-pass membrane protein</topology>
    </subcellularLocation>
</comment>
<comment type="domain">
    <text evidence="3">The extendend C-terminal region contains a kinase-like region, which encodes a catalytically inactive pseudokinase, and an extracellular region reminiscent of carbohydrate-binding proteins.</text>
</comment>
<comment type="PTM">
    <text evidence="3">Phosphorylated by PknB. Phosphorylation recruits FhaA.</text>
</comment>
<comment type="similarity">
    <text evidence="4">In the N-terminal section; belongs to the MurJ/MviN family.</text>
</comment>
<evidence type="ECO:0000255" key="1"/>
<evidence type="ECO:0000256" key="2">
    <source>
        <dbReference type="SAM" id="MobiDB-lite"/>
    </source>
</evidence>
<evidence type="ECO:0000269" key="3">
    <source>
    </source>
</evidence>
<evidence type="ECO:0000305" key="4"/>
<evidence type="ECO:0007744" key="5">
    <source>
    </source>
</evidence>
<evidence type="ECO:0007829" key="6">
    <source>
        <dbReference type="PDB" id="3OUK"/>
    </source>
</evidence>
<evidence type="ECO:0007829" key="7">
    <source>
        <dbReference type="PDB" id="3OUN"/>
    </source>
</evidence>
<evidence type="ECO:0007829" key="8">
    <source>
        <dbReference type="PDB" id="3UQC"/>
    </source>
</evidence>
<proteinExistence type="evidence at protein level"/>
<protein>
    <recommendedName>
        <fullName evidence="4">Probable peptidoglycan biosynthesis protein MviN</fullName>
    </recommendedName>
</protein>
<gene>
    <name type="primary">mviN</name>
    <name type="ordered locus">Rv3910</name>
</gene>
<dbReference type="EMBL" id="AL123456">
    <property type="protein sequence ID" value="CCP46739.1"/>
    <property type="molecule type" value="Genomic_DNA"/>
</dbReference>
<dbReference type="PIR" id="G70600">
    <property type="entry name" value="G70600"/>
</dbReference>
<dbReference type="RefSeq" id="NP_218427.1">
    <property type="nucleotide sequence ID" value="NC_000962.3"/>
</dbReference>
<dbReference type="PDB" id="3OTV">
    <property type="method" value="X-ray"/>
    <property type="resolution" value="3.09 A"/>
    <property type="chains" value="A/B/C/D=679-963"/>
</dbReference>
<dbReference type="PDB" id="3OUK">
    <property type="method" value="X-ray"/>
    <property type="resolution" value="3.40 A"/>
    <property type="chains" value="A=679-963"/>
</dbReference>
<dbReference type="PDB" id="3OUN">
    <property type="method" value="X-ray"/>
    <property type="resolution" value="2.70 A"/>
    <property type="chains" value="B=676-963"/>
</dbReference>
<dbReference type="PDB" id="3UQC">
    <property type="method" value="X-ray"/>
    <property type="resolution" value="2.26 A"/>
    <property type="chains" value="A/B/C/D=678-963"/>
</dbReference>
<dbReference type="PDBsum" id="3OTV"/>
<dbReference type="PDBsum" id="3OUK"/>
<dbReference type="PDBsum" id="3OUN"/>
<dbReference type="PDBsum" id="3UQC"/>
<dbReference type="SMR" id="P9WJK3"/>
<dbReference type="STRING" id="83332.Rv3910"/>
<dbReference type="iPTMnet" id="P9WJK3"/>
<dbReference type="PaxDb" id="83332-Rv3910"/>
<dbReference type="DNASU" id="886247"/>
<dbReference type="GeneID" id="886247"/>
<dbReference type="KEGG" id="mtu:Rv3910"/>
<dbReference type="KEGG" id="mtv:RVBD_3910"/>
<dbReference type="TubercuList" id="Rv3910"/>
<dbReference type="eggNOG" id="COG0728">
    <property type="taxonomic scope" value="Bacteria"/>
</dbReference>
<dbReference type="InParanoid" id="P9WJK3"/>
<dbReference type="OrthoDB" id="9786339at2"/>
<dbReference type="EvolutionaryTrace" id="P9WJK3"/>
<dbReference type="Proteomes" id="UP000001584">
    <property type="component" value="Chromosome"/>
</dbReference>
<dbReference type="GO" id="GO:0005576">
    <property type="term" value="C:extracellular region"/>
    <property type="evidence" value="ECO:0007005"/>
    <property type="project" value="MTBBASE"/>
</dbReference>
<dbReference type="GO" id="GO:0005886">
    <property type="term" value="C:plasma membrane"/>
    <property type="evidence" value="ECO:0007005"/>
    <property type="project" value="MTBBASE"/>
</dbReference>
<dbReference type="GO" id="GO:0015648">
    <property type="term" value="F:lipid-linked peptidoglycan transporter activity"/>
    <property type="evidence" value="ECO:0000318"/>
    <property type="project" value="GO_Central"/>
</dbReference>
<dbReference type="GO" id="GO:0034204">
    <property type="term" value="P:lipid translocation"/>
    <property type="evidence" value="ECO:0000318"/>
    <property type="project" value="GO_Central"/>
</dbReference>
<dbReference type="GO" id="GO:0015836">
    <property type="term" value="P:lipid-linked peptidoglycan transport"/>
    <property type="evidence" value="ECO:0000318"/>
    <property type="project" value="GO_Central"/>
</dbReference>
<dbReference type="GO" id="GO:0009252">
    <property type="term" value="P:peptidoglycan biosynthetic process"/>
    <property type="evidence" value="ECO:0000318"/>
    <property type="project" value="GO_Central"/>
</dbReference>
<dbReference type="GO" id="GO:0008360">
    <property type="term" value="P:regulation of cell shape"/>
    <property type="evidence" value="ECO:0007669"/>
    <property type="project" value="UniProtKB-KW"/>
</dbReference>
<dbReference type="CDD" id="cd13123">
    <property type="entry name" value="MATE_MurJ_like"/>
    <property type="match status" value="1"/>
</dbReference>
<dbReference type="CDD" id="cd13973">
    <property type="entry name" value="PK_MviN-like"/>
    <property type="match status" value="1"/>
</dbReference>
<dbReference type="FunFam" id="1.10.510.10:FF:001083">
    <property type="entry name" value="Probable peptidoglycan biosynthesis protein MviN"/>
    <property type="match status" value="1"/>
</dbReference>
<dbReference type="Gene3D" id="3.30.200.20">
    <property type="entry name" value="Phosphorylase Kinase, domain 1"/>
    <property type="match status" value="1"/>
</dbReference>
<dbReference type="Gene3D" id="1.10.510.10">
    <property type="entry name" value="Transferase(Phosphotransferase) domain 1"/>
    <property type="match status" value="1"/>
</dbReference>
<dbReference type="InterPro" id="IPR011009">
    <property type="entry name" value="Kinase-like_dom_sf"/>
</dbReference>
<dbReference type="InterPro" id="IPR051050">
    <property type="entry name" value="Lipid_II_flippase_MurJ/MviN"/>
</dbReference>
<dbReference type="InterPro" id="IPR004268">
    <property type="entry name" value="MurJ"/>
</dbReference>
<dbReference type="NCBIfam" id="TIGR01695">
    <property type="entry name" value="murJ_mviN"/>
    <property type="match status" value="1"/>
</dbReference>
<dbReference type="PANTHER" id="PTHR47019">
    <property type="entry name" value="LIPID II FLIPPASE MURJ"/>
    <property type="match status" value="1"/>
</dbReference>
<dbReference type="PANTHER" id="PTHR47019:SF1">
    <property type="entry name" value="LIPID II FLIPPASE MURJ"/>
    <property type="match status" value="1"/>
</dbReference>
<dbReference type="Pfam" id="PF03023">
    <property type="entry name" value="MurJ"/>
    <property type="match status" value="1"/>
</dbReference>
<dbReference type="PRINTS" id="PR01806">
    <property type="entry name" value="VIRFACTRMVIN"/>
</dbReference>
<dbReference type="SUPFAM" id="SSF56112">
    <property type="entry name" value="Protein kinase-like (PK-like)"/>
    <property type="match status" value="1"/>
</dbReference>